<organism>
    <name type="scientific">Xanthomonas euvesicatoria pv. vesicatoria (strain 85-10)</name>
    <name type="common">Xanthomonas campestris pv. vesicatoria</name>
    <dbReference type="NCBI Taxonomy" id="316273"/>
    <lineage>
        <taxon>Bacteria</taxon>
        <taxon>Pseudomonadati</taxon>
        <taxon>Pseudomonadota</taxon>
        <taxon>Gammaproteobacteria</taxon>
        <taxon>Lysobacterales</taxon>
        <taxon>Lysobacteraceae</taxon>
        <taxon>Xanthomonas</taxon>
    </lineage>
</organism>
<gene>
    <name evidence="1" type="primary">rpsM</name>
    <name type="ordered locus">XCV1020</name>
</gene>
<comment type="function">
    <text evidence="1">Located at the top of the head of the 30S subunit, it contacts several helices of the 16S rRNA. In the 70S ribosome it contacts the 23S rRNA (bridge B1a) and protein L5 of the 50S subunit (bridge B1b), connecting the 2 subunits; these bridges are implicated in subunit movement. Contacts the tRNAs in the A and P-sites.</text>
</comment>
<comment type="subunit">
    <text evidence="1">Part of the 30S ribosomal subunit. Forms a loose heterodimer with protein S19. Forms two bridges to the 50S subunit in the 70S ribosome.</text>
</comment>
<comment type="similarity">
    <text evidence="1">Belongs to the universal ribosomal protein uS13 family.</text>
</comment>
<keyword id="KW-0687">Ribonucleoprotein</keyword>
<keyword id="KW-0689">Ribosomal protein</keyword>
<keyword id="KW-0694">RNA-binding</keyword>
<keyword id="KW-0699">rRNA-binding</keyword>
<keyword id="KW-0820">tRNA-binding</keyword>
<accession>Q3BWW2</accession>
<evidence type="ECO:0000255" key="1">
    <source>
        <dbReference type="HAMAP-Rule" id="MF_01315"/>
    </source>
</evidence>
<evidence type="ECO:0000256" key="2">
    <source>
        <dbReference type="SAM" id="MobiDB-lite"/>
    </source>
</evidence>
<evidence type="ECO:0000305" key="3"/>
<proteinExistence type="inferred from homology"/>
<reference key="1">
    <citation type="journal article" date="2005" name="J. Bacteriol.">
        <title>Insights into genome plasticity and pathogenicity of the plant pathogenic Bacterium Xanthomonas campestris pv. vesicatoria revealed by the complete genome sequence.</title>
        <authorList>
            <person name="Thieme F."/>
            <person name="Koebnik R."/>
            <person name="Bekel T."/>
            <person name="Berger C."/>
            <person name="Boch J."/>
            <person name="Buettner D."/>
            <person name="Caldana C."/>
            <person name="Gaigalat L."/>
            <person name="Goesmann A."/>
            <person name="Kay S."/>
            <person name="Kirchner O."/>
            <person name="Lanz C."/>
            <person name="Linke B."/>
            <person name="McHardy A.C."/>
            <person name="Meyer F."/>
            <person name="Mittenhuber G."/>
            <person name="Nies D.H."/>
            <person name="Niesbach-Kloesgen U."/>
            <person name="Patschkowski T."/>
            <person name="Rueckert C."/>
            <person name="Rupp O."/>
            <person name="Schneiker S."/>
            <person name="Schuster S.C."/>
            <person name="Vorhoelter F.J."/>
            <person name="Weber E."/>
            <person name="Puehler A."/>
            <person name="Bonas U."/>
            <person name="Bartels D."/>
            <person name="Kaiser O."/>
        </authorList>
    </citation>
    <scope>NUCLEOTIDE SEQUENCE [LARGE SCALE GENOMIC DNA]</scope>
    <source>
        <strain>85-10</strain>
    </source>
</reference>
<name>RS13_XANE5</name>
<sequence>MARIAGVNLPAQKHVWVGLQSIYGIGRTRSKKLCESAGVTSTTKIRDLSEPEIERLRAEVGKYVVEGDLRREIGIAIKRLMDLGCYRGLRHRRGLPLRGQRTRTNARTRKGPRKAIRK</sequence>
<dbReference type="EMBL" id="AM039952">
    <property type="protein sequence ID" value="CAJ22651.1"/>
    <property type="molecule type" value="Genomic_DNA"/>
</dbReference>
<dbReference type="RefSeq" id="WP_003486672.1">
    <property type="nucleotide sequence ID" value="NZ_CP017190.1"/>
</dbReference>
<dbReference type="SMR" id="Q3BWW2"/>
<dbReference type="STRING" id="456327.BJD11_17635"/>
<dbReference type="GeneID" id="97509357"/>
<dbReference type="KEGG" id="xcv:XCV1020"/>
<dbReference type="eggNOG" id="COG0099">
    <property type="taxonomic scope" value="Bacteria"/>
</dbReference>
<dbReference type="HOGENOM" id="CLU_103849_1_2_6"/>
<dbReference type="Proteomes" id="UP000007069">
    <property type="component" value="Chromosome"/>
</dbReference>
<dbReference type="GO" id="GO:0005829">
    <property type="term" value="C:cytosol"/>
    <property type="evidence" value="ECO:0007669"/>
    <property type="project" value="TreeGrafter"/>
</dbReference>
<dbReference type="GO" id="GO:0015935">
    <property type="term" value="C:small ribosomal subunit"/>
    <property type="evidence" value="ECO:0007669"/>
    <property type="project" value="TreeGrafter"/>
</dbReference>
<dbReference type="GO" id="GO:0019843">
    <property type="term" value="F:rRNA binding"/>
    <property type="evidence" value="ECO:0007669"/>
    <property type="project" value="UniProtKB-UniRule"/>
</dbReference>
<dbReference type="GO" id="GO:0003735">
    <property type="term" value="F:structural constituent of ribosome"/>
    <property type="evidence" value="ECO:0007669"/>
    <property type="project" value="InterPro"/>
</dbReference>
<dbReference type="GO" id="GO:0000049">
    <property type="term" value="F:tRNA binding"/>
    <property type="evidence" value="ECO:0007669"/>
    <property type="project" value="UniProtKB-UniRule"/>
</dbReference>
<dbReference type="GO" id="GO:0006412">
    <property type="term" value="P:translation"/>
    <property type="evidence" value="ECO:0007669"/>
    <property type="project" value="UniProtKB-UniRule"/>
</dbReference>
<dbReference type="FunFam" id="1.10.8.50:FF:000001">
    <property type="entry name" value="30S ribosomal protein S13"/>
    <property type="match status" value="1"/>
</dbReference>
<dbReference type="FunFam" id="4.10.910.10:FF:000001">
    <property type="entry name" value="30S ribosomal protein S13"/>
    <property type="match status" value="1"/>
</dbReference>
<dbReference type="Gene3D" id="1.10.8.50">
    <property type="match status" value="1"/>
</dbReference>
<dbReference type="Gene3D" id="4.10.910.10">
    <property type="entry name" value="30s ribosomal protein s13, domain 2"/>
    <property type="match status" value="1"/>
</dbReference>
<dbReference type="HAMAP" id="MF_01315">
    <property type="entry name" value="Ribosomal_uS13"/>
    <property type="match status" value="1"/>
</dbReference>
<dbReference type="InterPro" id="IPR027437">
    <property type="entry name" value="Rbsml_uS13_C"/>
</dbReference>
<dbReference type="InterPro" id="IPR001892">
    <property type="entry name" value="Ribosomal_uS13"/>
</dbReference>
<dbReference type="InterPro" id="IPR010979">
    <property type="entry name" value="Ribosomal_uS13-like_H2TH"/>
</dbReference>
<dbReference type="InterPro" id="IPR019980">
    <property type="entry name" value="Ribosomal_uS13_bac-type"/>
</dbReference>
<dbReference type="InterPro" id="IPR018269">
    <property type="entry name" value="Ribosomal_uS13_CS"/>
</dbReference>
<dbReference type="NCBIfam" id="TIGR03631">
    <property type="entry name" value="uS13_bact"/>
    <property type="match status" value="1"/>
</dbReference>
<dbReference type="PANTHER" id="PTHR10871">
    <property type="entry name" value="30S RIBOSOMAL PROTEIN S13/40S RIBOSOMAL PROTEIN S18"/>
    <property type="match status" value="1"/>
</dbReference>
<dbReference type="PANTHER" id="PTHR10871:SF1">
    <property type="entry name" value="SMALL RIBOSOMAL SUBUNIT PROTEIN US13M"/>
    <property type="match status" value="1"/>
</dbReference>
<dbReference type="Pfam" id="PF00416">
    <property type="entry name" value="Ribosomal_S13"/>
    <property type="match status" value="1"/>
</dbReference>
<dbReference type="PIRSF" id="PIRSF002134">
    <property type="entry name" value="Ribosomal_S13"/>
    <property type="match status" value="1"/>
</dbReference>
<dbReference type="SUPFAM" id="SSF46946">
    <property type="entry name" value="S13-like H2TH domain"/>
    <property type="match status" value="1"/>
</dbReference>
<dbReference type="PROSITE" id="PS00646">
    <property type="entry name" value="RIBOSOMAL_S13_1"/>
    <property type="match status" value="1"/>
</dbReference>
<dbReference type="PROSITE" id="PS50159">
    <property type="entry name" value="RIBOSOMAL_S13_2"/>
    <property type="match status" value="1"/>
</dbReference>
<protein>
    <recommendedName>
        <fullName evidence="1">Small ribosomal subunit protein uS13</fullName>
    </recommendedName>
    <alternativeName>
        <fullName evidence="3">30S ribosomal protein S13</fullName>
    </alternativeName>
</protein>
<feature type="chain" id="PRO_0000230582" description="Small ribosomal subunit protein uS13">
    <location>
        <begin position="1"/>
        <end position="118"/>
    </location>
</feature>
<feature type="region of interest" description="Disordered" evidence="2">
    <location>
        <begin position="94"/>
        <end position="118"/>
    </location>
</feature>